<proteinExistence type="evidence at protein level"/>
<feature type="initiator methionine" description="Removed" evidence="2">
    <location>
        <position position="1"/>
    </location>
</feature>
<feature type="chain" id="PRO_0000077429" description="Carbonic anhydrase 3">
    <location>
        <begin position="2"/>
        <end position="260"/>
    </location>
</feature>
<feature type="domain" description="Alpha-carbonic anhydrase" evidence="4">
    <location>
        <begin position="3"/>
        <end position="259"/>
    </location>
</feature>
<feature type="region of interest" description="Involved in proton transfer" evidence="3">
    <location>
        <begin position="64"/>
        <end position="67"/>
    </location>
</feature>
<feature type="binding site" evidence="6">
    <location>
        <position position="94"/>
    </location>
    <ligand>
        <name>Zn(2+)</name>
        <dbReference type="ChEBI" id="CHEBI:29105"/>
        <note>catalytic</note>
    </ligand>
</feature>
<feature type="binding site" evidence="6">
    <location>
        <position position="96"/>
    </location>
    <ligand>
        <name>Zn(2+)</name>
        <dbReference type="ChEBI" id="CHEBI:29105"/>
        <note>catalytic</note>
    </ligand>
</feature>
<feature type="binding site" evidence="6">
    <location>
        <position position="119"/>
    </location>
    <ligand>
        <name>Zn(2+)</name>
        <dbReference type="ChEBI" id="CHEBI:29105"/>
        <note>catalytic</note>
    </ligand>
</feature>
<feature type="binding site" evidence="1">
    <location>
        <begin position="198"/>
        <end position="199"/>
    </location>
    <ligand>
        <name>substrate</name>
    </ligand>
</feature>
<feature type="modified residue" description="N-acetylalanine" evidence="2">
    <location>
        <position position="2"/>
    </location>
</feature>
<feature type="modified residue" description="Phosphoserine" evidence="11">
    <location>
        <position position="29"/>
    </location>
</feature>
<feature type="modified residue" description="Phosphoserine" evidence="11">
    <location>
        <position position="43"/>
    </location>
</feature>
<feature type="modified residue" description="Phosphoserine" evidence="11">
    <location>
        <position position="48"/>
    </location>
</feature>
<feature type="modified residue" description="Phosphoserine" evidence="11">
    <location>
        <position position="50"/>
    </location>
</feature>
<feature type="modified residue" description="Phosphoserine" evidence="11">
    <location>
        <position position="55"/>
    </location>
</feature>
<feature type="modified residue" description="Phosphothreonine" evidence="11">
    <location>
        <position position="73"/>
    </location>
</feature>
<feature type="modified residue" description="Phosphotyrosine" evidence="11">
    <location>
        <position position="127"/>
    </location>
</feature>
<feature type="modified residue" description="Phosphothreonine" evidence="11">
    <location>
        <position position="129"/>
    </location>
</feature>
<feature type="modified residue" description="S-glutathionyl cysteine" evidence="6">
    <location>
        <position position="182"/>
    </location>
</feature>
<feature type="modified residue" description="S-glutathionyl cysteine" evidence="6">
    <location>
        <position position="187"/>
    </location>
</feature>
<feature type="modified residue" description="Phosphothreonine" evidence="11">
    <location>
        <position position="216"/>
    </location>
</feature>
<feature type="modified residue" description="Phosphoserine" evidence="11">
    <location>
        <position position="219"/>
    </location>
</feature>
<feature type="sequence conflict" description="In Ref. 1; AAA40846." evidence="10" ref="1">
    <original>A</original>
    <variation>G</variation>
    <location>
        <position position="8"/>
    </location>
</feature>
<feature type="sequence conflict" description="In Ref. 7; AA sequence." evidence="10" ref="7">
    <original>H</original>
    <variation>HI</variation>
    <location>
        <position position="34"/>
    </location>
</feature>
<feature type="sequence conflict" description="In Ref. 7; AA sequence." evidence="10" ref="7">
    <original>K</original>
    <variation>R</variation>
    <location>
        <position position="57"/>
    </location>
</feature>
<feature type="sequence conflict" description="In Ref. 7; AA sequence." evidence="10" ref="7">
    <original>K</original>
    <variation>DR</variation>
    <location>
        <position position="126"/>
    </location>
</feature>
<feature type="sequence conflict" description="In Ref. 1; AAA40846." evidence="10" ref="1">
    <original>FG</original>
    <variation>SE</variation>
    <location>
        <begin position="130"/>
        <end position="131"/>
    </location>
</feature>
<feature type="sequence conflict" description="In Ref. 7; AA sequence." evidence="10" ref="7">
    <original>K</original>
    <variation>R</variation>
    <location>
        <position position="135"/>
    </location>
</feature>
<feature type="sequence conflict" description="In Ref. 7; AA sequence." evidence="10" ref="7">
    <original>DYW</original>
    <variation>QYP</variation>
    <location>
        <begin position="189"/>
        <end position="191"/>
    </location>
</feature>
<feature type="sequence conflict" description="In Ref. 1; AAA40846." evidence="10" ref="1">
    <original>KL</original>
    <variation>NV</variation>
    <location>
        <begin position="224"/>
        <end position="225"/>
    </location>
</feature>
<feature type="sequence conflict" description="In Ref. 7; AA sequence." evidence="10" ref="7">
    <original>LR</original>
    <variation>DE</variation>
    <location>
        <begin position="225"/>
        <end position="226"/>
    </location>
</feature>
<feature type="sequence conflict" description="In Ref. 7; AA sequence." evidence="10" ref="7">
    <original>A</original>
    <variation>G</variation>
    <location>
        <position position="230"/>
    </location>
</feature>
<feature type="turn" evidence="12">
    <location>
        <begin position="9"/>
        <end position="11"/>
    </location>
</feature>
<feature type="helix" evidence="12">
    <location>
        <begin position="13"/>
        <end position="18"/>
    </location>
</feature>
<feature type="helix" evidence="12">
    <location>
        <begin position="21"/>
        <end position="24"/>
    </location>
</feature>
<feature type="strand" evidence="12">
    <location>
        <begin position="25"/>
        <end position="27"/>
    </location>
</feature>
<feature type="helix" evidence="12">
    <location>
        <begin position="35"/>
        <end position="37"/>
    </location>
</feature>
<feature type="strand" evidence="12">
    <location>
        <begin position="38"/>
        <end position="40"/>
    </location>
</feature>
<feature type="strand" evidence="12">
    <location>
        <begin position="47"/>
        <end position="50"/>
    </location>
</feature>
<feature type="helix" evidence="12">
    <location>
        <begin position="53"/>
        <end position="55"/>
    </location>
</feature>
<feature type="strand" evidence="12">
    <location>
        <begin position="56"/>
        <end position="61"/>
    </location>
</feature>
<feature type="strand" evidence="12">
    <location>
        <begin position="66"/>
        <end position="70"/>
    </location>
</feature>
<feature type="strand" evidence="12">
    <location>
        <begin position="73"/>
        <end position="81"/>
    </location>
</feature>
<feature type="strand" evidence="12">
    <location>
        <begin position="88"/>
        <end position="97"/>
    </location>
</feature>
<feature type="strand" evidence="12">
    <location>
        <begin position="106"/>
        <end position="109"/>
    </location>
</feature>
<feature type="strand" evidence="12">
    <location>
        <begin position="115"/>
        <end position="123"/>
    </location>
</feature>
<feature type="helix" evidence="12">
    <location>
        <begin position="125"/>
        <end position="127"/>
    </location>
</feature>
<feature type="helix" evidence="12">
    <location>
        <begin position="130"/>
        <end position="133"/>
    </location>
</feature>
<feature type="strand" evidence="12">
    <location>
        <begin position="139"/>
        <end position="151"/>
    </location>
</feature>
<feature type="helix" evidence="12">
    <location>
        <begin position="154"/>
        <end position="162"/>
    </location>
</feature>
<feature type="helix" evidence="12">
    <location>
        <begin position="163"/>
        <end position="166"/>
    </location>
</feature>
<feature type="strand" evidence="12">
    <location>
        <begin position="172"/>
        <end position="174"/>
    </location>
</feature>
<feature type="helix" evidence="12">
    <location>
        <begin position="180"/>
        <end position="183"/>
    </location>
</feature>
<feature type="strand" evidence="12">
    <location>
        <begin position="190"/>
        <end position="195"/>
    </location>
</feature>
<feature type="strand" evidence="12">
    <location>
        <begin position="206"/>
        <end position="213"/>
    </location>
</feature>
<feature type="strand" evidence="12">
    <location>
        <begin position="215"/>
        <end position="217"/>
    </location>
</feature>
<feature type="helix" evidence="12">
    <location>
        <begin position="219"/>
        <end position="225"/>
    </location>
</feature>
<feature type="strand" evidence="12">
    <location>
        <begin position="229"/>
        <end position="231"/>
    </location>
</feature>
<feature type="strand" evidence="12">
    <location>
        <begin position="255"/>
        <end position="258"/>
    </location>
</feature>
<gene>
    <name type="primary">Ca3</name>
</gene>
<sequence length="260" mass="29431">MAKEWGYASHNGPEHWHELYPIAKGDNQSPIELHTKDIRHDPSLQPWSVSYDPGSAKTILNNGKTCRVVFDDTFDRSMLRGGPLSGPYRLRQFHLHWGSSDDHGSEHTVDGVKYAAELHLVHWNPKYNTFGEALKQPDGIAVVGIFLKIGREKGEFQILLDALDKIKTKGKEAPFNHFDPSCLFPACRDYWTYHGSFTTPPCEECIVWLLLKEPMTVSSDQMAKLRSLFASAENEPPVPLVGNWRPPQPIKGRVVRASFK</sequence>
<reference key="1">
    <citation type="journal article" date="1988" name="Biosci. Rep.">
        <title>Characterisation of cDNA clones for rat muscle carbonic anhydrase III.</title>
        <authorList>
            <person name="Kelly C.D."/>
            <person name="Carter N.D."/>
            <person name="Jeffery S."/>
            <person name="Edwards Y.H."/>
        </authorList>
    </citation>
    <scope>NUCLEOTIDE SEQUENCE [MRNA]</scope>
</reference>
<reference key="2">
    <citation type="journal article" date="2000" name="Arch. Biochem. Biophys.">
        <title>Suppression of carbonic anhydrase III in rat liver by a dioxin-related toxic compound, coplanar polychlorinated biphenyl, 3,3',4,4',5-pentachlorobiphenyl.</title>
        <authorList>
            <person name="Ikeda M."/>
            <person name="Ishii Y."/>
            <person name="Kato H."/>
            <person name="Akazawa D."/>
            <person name="Hatsumura M."/>
            <person name="Ishida T."/>
            <person name="Matsusue K."/>
            <person name="Yamada H."/>
            <person name="Oguri K."/>
        </authorList>
    </citation>
    <scope>NUCLEOTIDE SEQUENCE [MRNA]</scope>
    <scope>INDUCTION</scope>
    <source>
        <strain>Wistar</strain>
        <tissue>Liver</tissue>
        <tissue>Soleus muscle</tissue>
    </source>
</reference>
<reference key="3">
    <citation type="journal article" date="2000" name="FEBS Lett.">
        <title>Crystal structure of S-glutathiolated carbonic anhydrase III.</title>
        <authorList>
            <person name="Mallis R.J."/>
            <person name="Poland B.W."/>
            <person name="Chatterjee T.K."/>
            <person name="Fisher R.A."/>
            <person name="Darmawan S."/>
            <person name="Honzatko R.B."/>
            <person name="Thomas J.A."/>
        </authorList>
    </citation>
    <scope>NUCLEOTIDE SEQUENCE [MRNA]</scope>
    <scope>X-RAY CRYSTALLOGRAPHY (1.80 ANGSTROMS) IN COMPLEX WITH ZINC ION AND GLUTATHIONE</scope>
    <scope>GLUTATHIONYLATION AT CYS-182 AND CYS-187</scope>
    <scope>COFACTOR</scope>
    <source>
        <tissue>Liver</tissue>
    </source>
</reference>
<reference key="4">
    <citation type="journal article" date="2004" name="Genome Res.">
        <title>The status, quality, and expansion of the NIH full-length cDNA project: the Mammalian Gene Collection (MGC).</title>
        <authorList>
            <consortium name="The MGC Project Team"/>
        </authorList>
    </citation>
    <scope>NUCLEOTIDE SEQUENCE [LARGE SCALE MRNA]</scope>
    <source>
        <tissue>Prostate</tissue>
    </source>
</reference>
<reference key="5">
    <citation type="journal article" date="1993" name="Am. J. Physiol.">
        <title>Carbonic anhydrase III in obese Zucker rats.</title>
        <authorList>
            <person name="Lynch C.J."/>
            <person name="Brennan W.A. Jr."/>
            <person name="Vary T.C."/>
            <person name="Carter N."/>
            <person name="Dodgson S.J."/>
        </authorList>
    </citation>
    <scope>PROTEIN SEQUENCE OF 19-45 AND 120-142</scope>
    <scope>TISSUE SPECIFICITY</scope>
    <source>
        <strain>Zucker</strain>
    </source>
</reference>
<reference key="6">
    <citation type="journal article" date="1991" name="Comp. Biochem. Physiol.">
        <title>Analyses of polypeptides in the liver of a novel mutant (LEC rats) to hereditary hepatitis and hepatoma by two-dimensional gel electrophoresis: identification of P29/6.8 as carbonic anhydrase III and triosephosphate isomerase.</title>
        <authorList>
            <person name="Nagase T."/>
            <person name="Sugiyama T."/>
            <person name="Kawata S."/>
            <person name="Tarui S."/>
            <person name="Deutsch H.F."/>
            <person name="Taniguchi N."/>
        </authorList>
    </citation>
    <scope>PROTEIN SEQUENCE OF 19-33</scope>
    <source>
        <tissue>Liver</tissue>
    </source>
</reference>
<reference key="7">
    <citation type="journal article" date="1991" name="Arch. Biochem. Biophys.">
        <title>Identification of an abundant S-thiolated rat liver protein as carbonic anhydrase III; characterization of S-thiolation and dethiolation reactions.</title>
        <authorList>
            <person name="Chai Y.-C."/>
            <person name="Jung C.-H."/>
            <person name="Lii C.-K."/>
            <person name="Ashraf S.S."/>
            <person name="Hendrich S."/>
            <person name="Wolf B."/>
            <person name="Sies H."/>
            <person name="Thomas J.A."/>
        </authorList>
    </citation>
    <scope>PROTEIN SEQUENCE OF 25-35; 40-57; 68-76; 81-89; 114-135; 189-201 AND 225-239</scope>
    <source>
        <tissue>Liver</tissue>
    </source>
</reference>
<reference key="8">
    <citation type="submission" date="2006-12" db="UniProtKB">
        <authorList>
            <person name="Lubec G."/>
            <person name="Afjehi-Sadat L."/>
        </authorList>
    </citation>
    <scope>PROTEIN SEQUENCE OF 113-125 AND 136-148</scope>
    <scope>IDENTIFICATION BY MASS SPECTROMETRY</scope>
    <source>
        <strain>Sprague-Dawley</strain>
        <tissue>Spinal cord</tissue>
    </source>
</reference>
<reference key="9">
    <citation type="journal article" date="2005" name="Biol. Pharm. Bull.">
        <title>Suppression of carbonic anhydrase III mRNA level by an aryl hydrocarbon receptor ligand in primary cultured hepatocytes of rat.</title>
        <authorList>
            <person name="Ishii Y."/>
            <person name="Akazawa D."/>
            <person name="Aoki Y."/>
            <person name="Yamada H."/>
            <person name="Oguri K."/>
        </authorList>
    </citation>
    <scope>INDUCTION</scope>
</reference>
<reference key="10">
    <citation type="journal article" date="2012" name="Nat. Commun.">
        <title>Quantitative maps of protein phosphorylation sites across 14 different rat organs and tissues.</title>
        <authorList>
            <person name="Lundby A."/>
            <person name="Secher A."/>
            <person name="Lage K."/>
            <person name="Nordsborg N.B."/>
            <person name="Dmytriyev A."/>
            <person name="Lundby C."/>
            <person name="Olsen J.V."/>
        </authorList>
    </citation>
    <scope>PHOSPHORYLATION [LARGE SCALE ANALYSIS] AT SER-29; SER-43; SER-48; SER-50; SER-55; THR-73; TYR-127; THR-129; THR-216 AND SER-219</scope>
    <scope>IDENTIFICATION BY MASS SPECTROMETRY [LARGE SCALE ANALYSIS]</scope>
</reference>
<name>CAH3_RAT</name>
<keyword id="KW-0002">3D-structure</keyword>
<keyword id="KW-0007">Acetylation</keyword>
<keyword id="KW-0963">Cytoplasm</keyword>
<keyword id="KW-0903">Direct protein sequencing</keyword>
<keyword id="KW-1015">Disulfide bond</keyword>
<keyword id="KW-0318">Glutathionylation</keyword>
<keyword id="KW-0456">Lyase</keyword>
<keyword id="KW-0479">Metal-binding</keyword>
<keyword id="KW-0597">Phosphoprotein</keyword>
<keyword id="KW-1185">Reference proteome</keyword>
<keyword id="KW-0862">Zinc</keyword>
<protein>
    <recommendedName>
        <fullName>Carbonic anhydrase 3</fullName>
        <ecNumber evidence="3">4.2.1.1</ecNumber>
    </recommendedName>
    <alternativeName>
        <fullName evidence="9">Carbonate dehydratase III</fullName>
    </alternativeName>
    <alternativeName>
        <fullName evidence="9">Carbonic anhydrase III</fullName>
        <shortName evidence="9">CA-III</shortName>
    </alternativeName>
</protein>
<dbReference type="EC" id="4.2.1.1" evidence="3"/>
<dbReference type="EMBL" id="M22413">
    <property type="protein sequence ID" value="AAA40846.1"/>
    <property type="molecule type" value="mRNA"/>
</dbReference>
<dbReference type="EMBL" id="AB030829">
    <property type="protein sequence ID" value="BAB08111.1"/>
    <property type="molecule type" value="mRNA"/>
</dbReference>
<dbReference type="EMBL" id="AB030830">
    <property type="protein sequence ID" value="BAB20673.1"/>
    <property type="molecule type" value="mRNA"/>
</dbReference>
<dbReference type="EMBL" id="AF037072">
    <property type="protein sequence ID" value="AAB92558.1"/>
    <property type="molecule type" value="mRNA"/>
</dbReference>
<dbReference type="EMBL" id="BC061980">
    <property type="protein sequence ID" value="AAH61980.1"/>
    <property type="molecule type" value="mRNA"/>
</dbReference>
<dbReference type="PIR" id="I52551">
    <property type="entry name" value="I52551"/>
</dbReference>
<dbReference type="RefSeq" id="NP_062165.2">
    <property type="nucleotide sequence ID" value="NM_019292.4"/>
</dbReference>
<dbReference type="RefSeq" id="XP_006232178.1">
    <property type="nucleotide sequence ID" value="XM_006232116.1"/>
</dbReference>
<dbReference type="PDB" id="1FLJ">
    <property type="method" value="X-ray"/>
    <property type="resolution" value="1.80 A"/>
    <property type="chains" value="A=2-259"/>
</dbReference>
<dbReference type="PDBsum" id="1FLJ"/>
<dbReference type="SMR" id="P14141"/>
<dbReference type="FunCoup" id="P14141">
    <property type="interactions" value="283"/>
</dbReference>
<dbReference type="IntAct" id="P14141">
    <property type="interactions" value="2"/>
</dbReference>
<dbReference type="STRING" id="10116.ENSRNOP00000014177"/>
<dbReference type="CarbonylDB" id="P14141"/>
<dbReference type="GlyGen" id="P14141">
    <property type="glycosylation" value="1 site, 1 O-linked glycan (1 site)"/>
</dbReference>
<dbReference type="iPTMnet" id="P14141"/>
<dbReference type="PhosphoSitePlus" id="P14141"/>
<dbReference type="PaxDb" id="10116-ENSRNOP00000014177"/>
<dbReference type="Ensembl" id="ENSRNOT00000105296.1">
    <property type="protein sequence ID" value="ENSRNOP00000083954.1"/>
    <property type="gene ID" value="ENSRNOG00000010079.7"/>
</dbReference>
<dbReference type="GeneID" id="54232"/>
<dbReference type="KEGG" id="rno:54232"/>
<dbReference type="UCSC" id="RGD:2241">
    <property type="organism name" value="rat"/>
</dbReference>
<dbReference type="AGR" id="RGD:2241"/>
<dbReference type="CTD" id="12350"/>
<dbReference type="RGD" id="2241">
    <property type="gene designation" value="Ca3"/>
</dbReference>
<dbReference type="eggNOG" id="KOG0382">
    <property type="taxonomic scope" value="Eukaryota"/>
</dbReference>
<dbReference type="GeneTree" id="ENSGT00940000159435"/>
<dbReference type="HOGENOM" id="CLU_039326_2_1_1"/>
<dbReference type="InParanoid" id="P14141"/>
<dbReference type="OrthoDB" id="161at9989"/>
<dbReference type="PhylomeDB" id="P14141"/>
<dbReference type="TreeFam" id="TF316425"/>
<dbReference type="BRENDA" id="4.2.1.1">
    <property type="organism ID" value="5301"/>
</dbReference>
<dbReference type="Reactome" id="R-RNO-1475029">
    <property type="pathway name" value="Reversible hydration of carbon dioxide"/>
</dbReference>
<dbReference type="EvolutionaryTrace" id="P14141"/>
<dbReference type="PRO" id="PR:P14141"/>
<dbReference type="Proteomes" id="UP000002494">
    <property type="component" value="Chromosome 2"/>
</dbReference>
<dbReference type="Bgee" id="ENSRNOG00000010079">
    <property type="expression patterns" value="Expressed in esophagus and 20 other cell types or tissues"/>
</dbReference>
<dbReference type="GO" id="GO:0005737">
    <property type="term" value="C:cytoplasm"/>
    <property type="evidence" value="ECO:0000318"/>
    <property type="project" value="GO_Central"/>
</dbReference>
<dbReference type="GO" id="GO:0005829">
    <property type="term" value="C:cytosol"/>
    <property type="evidence" value="ECO:0000314"/>
    <property type="project" value="RGD"/>
</dbReference>
<dbReference type="GO" id="GO:0005634">
    <property type="term" value="C:nucleus"/>
    <property type="evidence" value="ECO:0000314"/>
    <property type="project" value="RGD"/>
</dbReference>
<dbReference type="GO" id="GO:0030017">
    <property type="term" value="C:sarcomere"/>
    <property type="evidence" value="ECO:0000314"/>
    <property type="project" value="RGD"/>
</dbReference>
<dbReference type="GO" id="GO:0004089">
    <property type="term" value="F:carbonate dehydratase activity"/>
    <property type="evidence" value="ECO:0000266"/>
    <property type="project" value="RGD"/>
</dbReference>
<dbReference type="GO" id="GO:0016151">
    <property type="term" value="F:nickel cation binding"/>
    <property type="evidence" value="ECO:0000266"/>
    <property type="project" value="RGD"/>
</dbReference>
<dbReference type="GO" id="GO:0016791">
    <property type="term" value="F:phosphatase activity"/>
    <property type="evidence" value="ECO:0000314"/>
    <property type="project" value="CACAO"/>
</dbReference>
<dbReference type="GO" id="GO:0008270">
    <property type="term" value="F:zinc ion binding"/>
    <property type="evidence" value="ECO:0007669"/>
    <property type="project" value="InterPro"/>
</dbReference>
<dbReference type="GO" id="GO:0071456">
    <property type="term" value="P:cellular response to hypoxia"/>
    <property type="evidence" value="ECO:0000270"/>
    <property type="project" value="RGD"/>
</dbReference>
<dbReference type="GO" id="GO:0032869">
    <property type="term" value="P:cellular response to insulin stimulus"/>
    <property type="evidence" value="ECO:0000270"/>
    <property type="project" value="RGD"/>
</dbReference>
<dbReference type="GO" id="GO:0044320">
    <property type="term" value="P:cellular response to leptin stimulus"/>
    <property type="evidence" value="ECO:0000270"/>
    <property type="project" value="RGD"/>
</dbReference>
<dbReference type="GO" id="GO:0097421">
    <property type="term" value="P:liver regeneration"/>
    <property type="evidence" value="ECO:0000314"/>
    <property type="project" value="RGD"/>
</dbReference>
<dbReference type="GO" id="GO:0043066">
    <property type="term" value="P:negative regulation of apoptotic process"/>
    <property type="evidence" value="ECO:0000314"/>
    <property type="project" value="RGD"/>
</dbReference>
<dbReference type="GO" id="GO:1903751">
    <property type="term" value="P:negative regulation of intrinsic apoptotic signaling pathway in response to hydrogen peroxide"/>
    <property type="evidence" value="ECO:0000315"/>
    <property type="project" value="RGD"/>
</dbReference>
<dbReference type="GO" id="GO:1903427">
    <property type="term" value="P:negative regulation of reactive oxygen species biosynthetic process"/>
    <property type="evidence" value="ECO:0000314"/>
    <property type="project" value="RGD"/>
</dbReference>
<dbReference type="GO" id="GO:0008284">
    <property type="term" value="P:positive regulation of cell population proliferation"/>
    <property type="evidence" value="ECO:0000314"/>
    <property type="project" value="RGD"/>
</dbReference>
<dbReference type="GO" id="GO:0097305">
    <property type="term" value="P:response to alcohol"/>
    <property type="evidence" value="ECO:0000270"/>
    <property type="project" value="RGD"/>
</dbReference>
<dbReference type="GO" id="GO:0009617">
    <property type="term" value="P:response to bacterium"/>
    <property type="evidence" value="ECO:0000266"/>
    <property type="project" value="RGD"/>
</dbReference>
<dbReference type="GO" id="GO:0045471">
    <property type="term" value="P:response to ethanol"/>
    <property type="evidence" value="ECO:0000270"/>
    <property type="project" value="RGD"/>
</dbReference>
<dbReference type="GO" id="GO:0033993">
    <property type="term" value="P:response to lipid"/>
    <property type="evidence" value="ECO:0000270"/>
    <property type="project" value="RGD"/>
</dbReference>
<dbReference type="GO" id="GO:0006979">
    <property type="term" value="P:response to oxidative stress"/>
    <property type="evidence" value="ECO:0000315"/>
    <property type="project" value="RGD"/>
</dbReference>
<dbReference type="GO" id="GO:0003009">
    <property type="term" value="P:skeletal muscle contraction"/>
    <property type="evidence" value="ECO:0000270"/>
    <property type="project" value="RGD"/>
</dbReference>
<dbReference type="CDD" id="cd03119">
    <property type="entry name" value="alpha_CA_I_II_III_XIII"/>
    <property type="match status" value="1"/>
</dbReference>
<dbReference type="FunFam" id="3.10.200.10:FF:000001">
    <property type="entry name" value="Carbonic anhydrase 2"/>
    <property type="match status" value="1"/>
</dbReference>
<dbReference type="Gene3D" id="3.10.200.10">
    <property type="entry name" value="Alpha carbonic anhydrase"/>
    <property type="match status" value="1"/>
</dbReference>
<dbReference type="InterPro" id="IPR001148">
    <property type="entry name" value="CA_dom"/>
</dbReference>
<dbReference type="InterPro" id="IPR036398">
    <property type="entry name" value="CA_dom_sf"/>
</dbReference>
<dbReference type="InterPro" id="IPR023561">
    <property type="entry name" value="Carbonic_anhydrase_a-class"/>
</dbReference>
<dbReference type="InterPro" id="IPR018338">
    <property type="entry name" value="Carbonic_anhydrase_a-class_CS"/>
</dbReference>
<dbReference type="PANTHER" id="PTHR18952">
    <property type="entry name" value="CARBONIC ANHYDRASE"/>
    <property type="match status" value="1"/>
</dbReference>
<dbReference type="PANTHER" id="PTHR18952:SF127">
    <property type="entry name" value="CARBONIC ANHYDRASE 3"/>
    <property type="match status" value="1"/>
</dbReference>
<dbReference type="Pfam" id="PF00194">
    <property type="entry name" value="Carb_anhydrase"/>
    <property type="match status" value="1"/>
</dbReference>
<dbReference type="SMART" id="SM01057">
    <property type="entry name" value="Carb_anhydrase"/>
    <property type="match status" value="1"/>
</dbReference>
<dbReference type="SUPFAM" id="SSF51069">
    <property type="entry name" value="Carbonic anhydrase"/>
    <property type="match status" value="1"/>
</dbReference>
<dbReference type="PROSITE" id="PS00162">
    <property type="entry name" value="ALPHA_CA_1"/>
    <property type="match status" value="1"/>
</dbReference>
<dbReference type="PROSITE" id="PS51144">
    <property type="entry name" value="ALPHA_CA_2"/>
    <property type="match status" value="1"/>
</dbReference>
<organism>
    <name type="scientific">Rattus norvegicus</name>
    <name type="common">Rat</name>
    <dbReference type="NCBI Taxonomy" id="10116"/>
    <lineage>
        <taxon>Eukaryota</taxon>
        <taxon>Metazoa</taxon>
        <taxon>Chordata</taxon>
        <taxon>Craniata</taxon>
        <taxon>Vertebrata</taxon>
        <taxon>Euteleostomi</taxon>
        <taxon>Mammalia</taxon>
        <taxon>Eutheria</taxon>
        <taxon>Euarchontoglires</taxon>
        <taxon>Glires</taxon>
        <taxon>Rodentia</taxon>
        <taxon>Myomorpha</taxon>
        <taxon>Muroidea</taxon>
        <taxon>Muridae</taxon>
        <taxon>Murinae</taxon>
        <taxon>Rattus</taxon>
    </lineage>
</organism>
<evidence type="ECO:0000250" key="1">
    <source>
        <dbReference type="UniProtKB" id="P00918"/>
    </source>
</evidence>
<evidence type="ECO:0000250" key="2">
    <source>
        <dbReference type="UniProtKB" id="P07450"/>
    </source>
</evidence>
<evidence type="ECO:0000250" key="3">
    <source>
        <dbReference type="UniProtKB" id="P07451"/>
    </source>
</evidence>
<evidence type="ECO:0000255" key="4">
    <source>
        <dbReference type="PROSITE-ProRule" id="PRU01134"/>
    </source>
</evidence>
<evidence type="ECO:0000269" key="5">
    <source>
    </source>
</evidence>
<evidence type="ECO:0000269" key="6">
    <source>
    </source>
</evidence>
<evidence type="ECO:0000269" key="7">
    <source>
    </source>
</evidence>
<evidence type="ECO:0000269" key="8">
    <source>
    </source>
</evidence>
<evidence type="ECO:0000303" key="9">
    <source>
    </source>
</evidence>
<evidence type="ECO:0000305" key="10"/>
<evidence type="ECO:0007744" key="11">
    <source>
    </source>
</evidence>
<evidence type="ECO:0007829" key="12">
    <source>
        <dbReference type="PDB" id="1FLJ"/>
    </source>
</evidence>
<accession>P14141</accession>
<accession>O54961</accession>
<accession>Q9QV77</accession>
<comment type="function">
    <text evidence="3">Reversible hydration of carbon dioxide.</text>
</comment>
<comment type="catalytic activity">
    <reaction evidence="3">
        <text>hydrogencarbonate + H(+) = CO2 + H2O</text>
        <dbReference type="Rhea" id="RHEA:10748"/>
        <dbReference type="ChEBI" id="CHEBI:15377"/>
        <dbReference type="ChEBI" id="CHEBI:15378"/>
        <dbReference type="ChEBI" id="CHEBI:16526"/>
        <dbReference type="ChEBI" id="CHEBI:17544"/>
        <dbReference type="EC" id="4.2.1.1"/>
    </reaction>
</comment>
<comment type="cofactor">
    <cofactor evidence="6">
        <name>Zn(2+)</name>
        <dbReference type="ChEBI" id="CHEBI:29105"/>
    </cofactor>
</comment>
<comment type="activity regulation">
    <text evidence="3">Inhibited by acetazolamide.</text>
</comment>
<comment type="subcellular location">
    <subcellularLocation>
        <location evidence="3">Cytoplasm</location>
    </subcellularLocation>
</comment>
<comment type="tissue specificity">
    <text evidence="8">Expressed in liver and muscle.</text>
</comment>
<comment type="induction">
    <text evidence="5 7">Repressed by 3,3',4,4',5-pentachlorobiphenyl (PenCB) and 3-methylchlantherene (3MC).</text>
</comment>
<comment type="PTM">
    <text evidence="6">S-thiolated both by thiol-disulfide exchange with glutathione disulfide and by oxyradical-initiated S-thiolation with reduced glutathione.</text>
</comment>
<comment type="PTM">
    <text evidence="6">S-glutathionylated in hepatocytes under oxidative stress.</text>
</comment>
<comment type="miscellaneous">
    <text evidence="8">Expressed at much higher levels in the adipocytes of lean Zucker rats than in obese Zucker rats. Expression is higher is the adipocytes of male Zucker rats than in female Zucker rats.</text>
</comment>
<comment type="similarity">
    <text evidence="10">Belongs to the alpha-carbonic anhydrase family.</text>
</comment>